<gene>
    <name type="ordered locus">NGR_a02310</name>
    <name type="ORF">y4nK</name>
</gene>
<dbReference type="EMBL" id="U00090">
    <property type="protein sequence ID" value="AAB91790.1"/>
    <property type="molecule type" value="Genomic_DNA"/>
</dbReference>
<dbReference type="RefSeq" id="NP_443994.1">
    <property type="nucleotide sequence ID" value="NC_000914.2"/>
</dbReference>
<dbReference type="KEGG" id="rhi:NGR_a02310"/>
<dbReference type="PATRIC" id="fig|394.7.peg.244"/>
<dbReference type="eggNOG" id="ENOG5031ZEM">
    <property type="taxonomic scope" value="Bacteria"/>
</dbReference>
<dbReference type="HOGENOM" id="CLU_410452_0_0_5"/>
<dbReference type="OrthoDB" id="118463at2"/>
<dbReference type="Proteomes" id="UP000001054">
    <property type="component" value="Plasmid pNGR234a"/>
</dbReference>
<dbReference type="GO" id="GO:0005886">
    <property type="term" value="C:plasma membrane"/>
    <property type="evidence" value="ECO:0007669"/>
    <property type="project" value="UniProtKB-SubCell"/>
</dbReference>
<reference key="1">
    <citation type="journal article" date="1997" name="Nature">
        <title>Molecular basis of symbiosis between Rhizobium and legumes.</title>
        <authorList>
            <person name="Freiberg C.A."/>
            <person name="Fellay R."/>
            <person name="Bairoch A."/>
            <person name="Broughton W.J."/>
            <person name="Rosenthal A."/>
            <person name="Perret X."/>
        </authorList>
    </citation>
    <scope>NUCLEOTIDE SEQUENCE [LARGE SCALE GENOMIC DNA]</scope>
    <source>
        <strain>NBRC 101917 / NGR234</strain>
    </source>
</reference>
<reference key="2">
    <citation type="journal article" date="2009" name="Appl. Environ. Microbiol.">
        <title>Rhizobium sp. strain NGR234 possesses a remarkable number of secretion systems.</title>
        <authorList>
            <person name="Schmeisser C."/>
            <person name="Liesegang H."/>
            <person name="Krysciak D."/>
            <person name="Bakkou N."/>
            <person name="Le Quere A."/>
            <person name="Wollherr A."/>
            <person name="Heinemeyer I."/>
            <person name="Morgenstern B."/>
            <person name="Pommerening-Roeser A."/>
            <person name="Flores M."/>
            <person name="Palacios R."/>
            <person name="Brenner S."/>
            <person name="Gottschalk G."/>
            <person name="Schmitz R.A."/>
            <person name="Broughton W.J."/>
            <person name="Perret X."/>
            <person name="Strittmatter A.W."/>
            <person name="Streit W.R."/>
        </authorList>
    </citation>
    <scope>NUCLEOTIDE SEQUENCE [LARGE SCALE GENOMIC DNA]</scope>
    <source>
        <strain>NBRC 101917 / NGR234</strain>
    </source>
</reference>
<geneLocation type="plasmid">
    <name>sym pNGR234a</name>
</geneLocation>
<feature type="chain" id="PRO_0000200919" description="Uncharacterized protein y4nK">
    <location>
        <begin position="1"/>
        <end position="662"/>
    </location>
</feature>
<feature type="transmembrane region" description="Helical" evidence="1">
    <location>
        <begin position="10"/>
        <end position="30"/>
    </location>
</feature>
<feature type="transmembrane region" description="Helical" evidence="1">
    <location>
        <begin position="46"/>
        <end position="66"/>
    </location>
</feature>
<feature type="transmembrane region" description="Helical" evidence="1">
    <location>
        <begin position="68"/>
        <end position="88"/>
    </location>
</feature>
<feature type="transmembrane region" description="Helical" evidence="1">
    <location>
        <begin position="101"/>
        <end position="121"/>
    </location>
</feature>
<feature type="transmembrane region" description="Helical" evidence="1">
    <location>
        <begin position="167"/>
        <end position="187"/>
    </location>
</feature>
<feature type="transmembrane region" description="Helical" evidence="1">
    <location>
        <begin position="193"/>
        <end position="213"/>
    </location>
</feature>
<feature type="transmembrane region" description="Helical" evidence="1">
    <location>
        <begin position="217"/>
        <end position="237"/>
    </location>
</feature>
<feature type="transmembrane region" description="Helical" evidence="1">
    <location>
        <begin position="263"/>
        <end position="283"/>
    </location>
</feature>
<feature type="transmembrane region" description="Helical" evidence="1">
    <location>
        <begin position="285"/>
        <end position="305"/>
    </location>
</feature>
<feature type="transmembrane region" description="Helical" evidence="1">
    <location>
        <begin position="312"/>
        <end position="332"/>
    </location>
</feature>
<feature type="transmembrane region" description="Helical" evidence="1">
    <location>
        <begin position="342"/>
        <end position="362"/>
    </location>
</feature>
<feature type="transmembrane region" description="Helical" evidence="1">
    <location>
        <begin position="373"/>
        <end position="393"/>
    </location>
</feature>
<feature type="transmembrane region" description="Helical" evidence="1">
    <location>
        <begin position="394"/>
        <end position="414"/>
    </location>
</feature>
<feature type="transmembrane region" description="Helical" evidence="1">
    <location>
        <begin position="432"/>
        <end position="452"/>
    </location>
</feature>
<feature type="transmembrane region" description="Helical" evidence="1">
    <location>
        <begin position="460"/>
        <end position="480"/>
    </location>
</feature>
<feature type="transmembrane region" description="Helical" evidence="1">
    <location>
        <begin position="485"/>
        <end position="505"/>
    </location>
</feature>
<keyword id="KW-1003">Cell membrane</keyword>
<keyword id="KW-0472">Membrane</keyword>
<keyword id="KW-0614">Plasmid</keyword>
<keyword id="KW-1185">Reference proteome</keyword>
<keyword id="KW-0812">Transmembrane</keyword>
<keyword id="KW-1133">Transmembrane helix</keyword>
<accession>P55583</accession>
<evidence type="ECO:0000255" key="1"/>
<evidence type="ECO:0000305" key="2"/>
<proteinExistence type="predicted"/>
<organism>
    <name type="scientific">Sinorhizobium fredii (strain NBRC 101917 / NGR234)</name>
    <dbReference type="NCBI Taxonomy" id="394"/>
    <lineage>
        <taxon>Bacteria</taxon>
        <taxon>Pseudomonadati</taxon>
        <taxon>Pseudomonadota</taxon>
        <taxon>Alphaproteobacteria</taxon>
        <taxon>Hyphomicrobiales</taxon>
        <taxon>Rhizobiaceae</taxon>
        <taxon>Sinorhizobium/Ensifer group</taxon>
        <taxon>Sinorhizobium</taxon>
    </lineage>
</organism>
<sequence length="662" mass="72843">MRPSVLVQTSSIVSSALVSSAIGYAIGWPVSKYFDSNTTMRLLLSPVIGLGIFGAVAVSIFHFLPITAINLMLIVLGLSAVAFWLSKGTIDPLLRSPASPGFCWFTVAFLLCLLPAFEIIPQHYGGSVGVGHPIWDHAKIAIVNEIAQNGLPPANPFHSEAGSPNTLIYYYVWHFIAACSSVITGATGWEADIALTGMTALFSTFVVTWLAVARSRSAYAAWWSLPLLFVGSLKPAVRFVFGKWLEKWMAPEHGLQTWIIQAPWVPQHVFSGTLALIAIMAYLRILYSNAGRNMALAVFMGAILASAYGSSMWAGSLSLLLILPLVGALSVSHVLKVKRLLEVLISLSVTVVITLLCAAVLIREQSAILHTRKVVEFWVFPIFAGDYWFLDIPGFWLVLVFLEFGIIYLSFLIWSFARPSDDSKRYAHIDCALTVSVLAPLFCTQILHSVIMYNDLGWRVLIPSMLVMTALTSGLFSTTIGKGTLVGRLTTITAIILLAPSILVGAKSVYSNTFKFQVEGPDSEEGTAFKASPEMWKAVREVTPPNEAVANNPLDLASVTYTPANISWAILSQRRHCGTTLDFLRAYAAQLTPKKASEIYNFFVRAFAGLATEDHLRIMKEKYRCRTLVVTSRDGLWGKPVLDNNSVYKLVSEKKGKWRIYR</sequence>
<protein>
    <recommendedName>
        <fullName>Uncharacterized protein y4nK</fullName>
    </recommendedName>
</protein>
<comment type="subcellular location">
    <subcellularLocation>
        <location evidence="2">Cell membrane</location>
        <topology evidence="2">Multi-pass membrane protein</topology>
    </subcellularLocation>
</comment>
<name>Y4NK_SINFN</name>